<sequence length="150" mass="16081">MASYRLLLLCLAGLVFVSEAGPAGAGESKCPLMVKVLDAVRGSPAVNVGVKVFKKAADGTWEPFALGKTSEFGELHGLTTDEKFVEGIYKVELDTKSYWKALGISPFHEYAEVVFTANDSGRRHYTIAALLSPYSYSTTALVSSPKEGAL</sequence>
<comment type="function">
    <text evidence="3">Thyroid hormone-binding protein. Probably transports thyroxine from the bloodstream to the brain.</text>
</comment>
<comment type="subunit">
    <text evidence="3">Homotetramer. Dimer of dimers. In the homotetramer, subunits assemble around a central channel that can accommodate two ligand molecules. Interacts with RBP4.</text>
</comment>
<comment type="subcellular location">
    <subcellularLocation>
        <location evidence="3">Secreted</location>
    </subcellularLocation>
</comment>
<comment type="tissue specificity">
    <text evidence="3">Detected in plasma and cerebrospinal fluid (at protein level). Highly expressed in the choroid plexus. Detected in liver.</text>
</comment>
<comment type="PTM">
    <text evidence="1">Sulfonation of the reactive cysteine Cys-30 enhances the stability of the native conformation of TTR, avoiding misassembly of the protein leading to amyloid formation.</text>
</comment>
<comment type="similarity">
    <text evidence="4">Belongs to the transthyretin family.</text>
</comment>
<accession>P50390</accession>
<accession>Q2IA93</accession>
<organism>
    <name type="scientific">Sus scrofa</name>
    <name type="common">Pig</name>
    <dbReference type="NCBI Taxonomy" id="9823"/>
    <lineage>
        <taxon>Eukaryota</taxon>
        <taxon>Metazoa</taxon>
        <taxon>Chordata</taxon>
        <taxon>Craniata</taxon>
        <taxon>Vertebrata</taxon>
        <taxon>Euteleostomi</taxon>
        <taxon>Mammalia</taxon>
        <taxon>Eutheria</taxon>
        <taxon>Laurasiatheria</taxon>
        <taxon>Artiodactyla</taxon>
        <taxon>Suina</taxon>
        <taxon>Suidae</taxon>
        <taxon>Sus</taxon>
    </lineage>
</organism>
<feature type="signal peptide" evidence="2">
    <location>
        <begin position="1"/>
        <end position="20"/>
    </location>
</feature>
<feature type="chain" id="PRO_0000035763" description="Transthyretin">
    <location>
        <begin position="21"/>
        <end position="150"/>
    </location>
</feature>
<feature type="binding site" evidence="1">
    <location>
        <position position="35"/>
    </location>
    <ligand>
        <name>L-thyroxine</name>
        <dbReference type="ChEBI" id="CHEBI:58448"/>
    </ligand>
</feature>
<feature type="binding site" evidence="1">
    <location>
        <position position="74"/>
    </location>
    <ligand>
        <name>L-thyroxine</name>
        <dbReference type="ChEBI" id="CHEBI:58448"/>
    </ligand>
</feature>
<feature type="binding site" evidence="1">
    <location>
        <position position="137"/>
    </location>
    <ligand>
        <name>L-thyroxine</name>
        <dbReference type="ChEBI" id="CHEBI:58448"/>
    </ligand>
</feature>
<feature type="modified residue" description="Sulfocysteine" evidence="1">
    <location>
        <position position="30"/>
    </location>
</feature>
<feature type="modified residue" description="4-carboxyglutamate" evidence="1">
    <location>
        <position position="62"/>
    </location>
</feature>
<feature type="glycosylation site" description="N-linked (GlcNAc...) asparagine" evidence="2">
    <location>
        <position position="118"/>
    </location>
</feature>
<reference key="1">
    <citation type="journal article" date="1995" name="Eur. J. Biochem.">
        <title>Binding of thyroxine to pig transthyretin, its cDNA structure, and other properties.</title>
        <authorList>
            <person name="Duan W."/>
            <person name="Richardson S.J."/>
            <person name="Koehrle J."/>
            <person name="Chang L."/>
            <person name="Southwell B.R."/>
            <person name="Harms P.J."/>
            <person name="Brack C.M."/>
            <person name="Pettersson T.M."/>
            <person name="Schreiber G."/>
        </authorList>
    </citation>
    <scope>NUCLEOTIDE SEQUENCE [MRNA]</scope>
    <scope>FUNCTION</scope>
    <scope>TISSUE SPECIFICITY</scope>
    <scope>SUBCELLULAR LOCATION</scope>
    <scope>SUBUNIT</scope>
    <scope>INTERACTION WITH RBP4</scope>
    <source>
        <strain>Large white</strain>
        <tissue>Choroid plexus</tissue>
    </source>
</reference>
<reference key="2">
    <citation type="submission" date="2005-07" db="EMBL/GenBank/DDBJ databases">
        <title>Genetic variation and expression profile of porcine transthyretin gene.</title>
        <authorList>
            <person name="Jacobsen M."/>
            <person name="Horn P."/>
            <person name="Bendixen C."/>
        </authorList>
    </citation>
    <scope>NUCLEOTIDE SEQUENCE [GENOMIC DNA]</scope>
</reference>
<reference key="3">
    <citation type="journal article" date="1996" name="Anim. Genet.">
        <title>The porcine TTR locus maps to chromosome 6q.</title>
        <authorList>
            <person name="Archibald A.L."/>
            <person name="Couperwhite S."/>
            <person name="Jiang Z.H."/>
        </authorList>
    </citation>
    <scope>NUCLEOTIDE SEQUENCE [MRNA] OF 4-150</scope>
    <source>
        <tissue>Liver</tissue>
    </source>
</reference>
<proteinExistence type="evidence at protein level"/>
<dbReference type="EMBL" id="X82258">
    <property type="protein sequence ID" value="CAA57713.1"/>
    <property type="molecule type" value="mRNA"/>
</dbReference>
<dbReference type="EMBL" id="U16131">
    <property type="protein sequence ID" value="AAA79042.1"/>
    <property type="molecule type" value="mRNA"/>
</dbReference>
<dbReference type="EMBL" id="DQ117974">
    <property type="protein sequence ID" value="AAZ94915.1"/>
    <property type="molecule type" value="Genomic_DNA"/>
</dbReference>
<dbReference type="EMBL" id="DQ117971">
    <property type="protein sequence ID" value="AAZ94915.1"/>
    <property type="status" value="JOINED"/>
    <property type="molecule type" value="Genomic_DNA"/>
</dbReference>
<dbReference type="EMBL" id="DQ117972">
    <property type="protein sequence ID" value="AAZ94915.1"/>
    <property type="status" value="JOINED"/>
    <property type="molecule type" value="Genomic_DNA"/>
</dbReference>
<dbReference type="EMBL" id="DQ117973">
    <property type="protein sequence ID" value="AAZ94915.1"/>
    <property type="status" value="JOINED"/>
    <property type="molecule type" value="Genomic_DNA"/>
</dbReference>
<dbReference type="EMBL" id="X87846">
    <property type="protein sequence ID" value="CAA61120.1"/>
    <property type="molecule type" value="mRNA"/>
</dbReference>
<dbReference type="PIR" id="S65955">
    <property type="entry name" value="S65955"/>
</dbReference>
<dbReference type="RefSeq" id="NP_999377.1">
    <property type="nucleotide sequence ID" value="NM_214212.1"/>
</dbReference>
<dbReference type="SMR" id="P50390"/>
<dbReference type="FunCoup" id="P50390">
    <property type="interactions" value="644"/>
</dbReference>
<dbReference type="STRING" id="9823.ENSSSCP00000072347"/>
<dbReference type="GlyCosmos" id="P50390">
    <property type="glycosylation" value="1 site, No reported glycans"/>
</dbReference>
<dbReference type="GlyGen" id="P50390">
    <property type="glycosylation" value="1 site"/>
</dbReference>
<dbReference type="PaxDb" id="9823-ENSSSCP00000022931"/>
<dbReference type="PeptideAtlas" id="P50390"/>
<dbReference type="Ensembl" id="ENSSSCT00060084543.1">
    <property type="protein sequence ID" value="ENSSSCP00060036610.1"/>
    <property type="gene ID" value="ENSSSCG00060061967.1"/>
</dbReference>
<dbReference type="Ensembl" id="ENSSSCT00085039661">
    <property type="protein sequence ID" value="ENSSSCP00085027578"/>
    <property type="gene ID" value="ENSSSCG00085020884"/>
</dbReference>
<dbReference type="Ensembl" id="ENSSSCT00110005947">
    <property type="protein sequence ID" value="ENSSSCP00110004408"/>
    <property type="gene ID" value="ENSSSCG00110002977"/>
</dbReference>
<dbReference type="Ensembl" id="ENSSSCT00115024601">
    <property type="protein sequence ID" value="ENSSSCP00115023326"/>
    <property type="gene ID" value="ENSSSCG00115014138"/>
</dbReference>
<dbReference type="GeneID" id="397419"/>
<dbReference type="KEGG" id="ssc:397419"/>
<dbReference type="CTD" id="7276"/>
<dbReference type="eggNOG" id="KOG3006">
    <property type="taxonomic scope" value="Eukaryota"/>
</dbReference>
<dbReference type="HOGENOM" id="CLU_115536_2_0_1"/>
<dbReference type="InParanoid" id="P50390"/>
<dbReference type="OMA" id="AMYKVEL"/>
<dbReference type="OrthoDB" id="10265230at2759"/>
<dbReference type="TreeFam" id="TF300210"/>
<dbReference type="Reactome" id="R-SSC-2453902">
    <property type="pathway name" value="The canonical retinoid cycle in rods (twilight vision)"/>
</dbReference>
<dbReference type="Reactome" id="R-SSC-6798695">
    <property type="pathway name" value="Neutrophil degranulation"/>
</dbReference>
<dbReference type="Reactome" id="R-SSC-975634">
    <property type="pathway name" value="Retinoid metabolism and transport"/>
</dbReference>
<dbReference type="Proteomes" id="UP000008227">
    <property type="component" value="Unplaced"/>
</dbReference>
<dbReference type="Proteomes" id="UP000314985">
    <property type="component" value="Unplaced"/>
</dbReference>
<dbReference type="Proteomes" id="UP000694570">
    <property type="component" value="Unplaced"/>
</dbReference>
<dbReference type="Proteomes" id="UP000694571">
    <property type="component" value="Unplaced"/>
</dbReference>
<dbReference type="Proteomes" id="UP000694720">
    <property type="component" value="Unplaced"/>
</dbReference>
<dbReference type="Proteomes" id="UP000694722">
    <property type="component" value="Unplaced"/>
</dbReference>
<dbReference type="Proteomes" id="UP000694723">
    <property type="component" value="Unplaced"/>
</dbReference>
<dbReference type="Proteomes" id="UP000694724">
    <property type="component" value="Unplaced"/>
</dbReference>
<dbReference type="Proteomes" id="UP000694725">
    <property type="component" value="Unplaced"/>
</dbReference>
<dbReference type="Proteomes" id="UP000694726">
    <property type="component" value="Unplaced"/>
</dbReference>
<dbReference type="Proteomes" id="UP000694727">
    <property type="component" value="Unplaced"/>
</dbReference>
<dbReference type="Proteomes" id="UP000694728">
    <property type="component" value="Unplaced"/>
</dbReference>
<dbReference type="GO" id="GO:0005615">
    <property type="term" value="C:extracellular space"/>
    <property type="evidence" value="ECO:0000314"/>
    <property type="project" value="AgBase"/>
</dbReference>
<dbReference type="GO" id="GO:0005179">
    <property type="term" value="F:hormone activity"/>
    <property type="evidence" value="ECO:0007669"/>
    <property type="project" value="UniProtKB-KW"/>
</dbReference>
<dbReference type="GO" id="GO:0036094">
    <property type="term" value="F:small molecule binding"/>
    <property type="evidence" value="ECO:0000353"/>
    <property type="project" value="AgBase"/>
</dbReference>
<dbReference type="GO" id="GO:0070324">
    <property type="term" value="F:thyroid hormone binding"/>
    <property type="evidence" value="ECO:0000315"/>
    <property type="project" value="AgBase"/>
</dbReference>
<dbReference type="GO" id="GO:0006144">
    <property type="term" value="P:purine nucleobase metabolic process"/>
    <property type="evidence" value="ECO:0000318"/>
    <property type="project" value="GO_Central"/>
</dbReference>
<dbReference type="CDD" id="cd05821">
    <property type="entry name" value="TLP_Transthyretin"/>
    <property type="match status" value="1"/>
</dbReference>
<dbReference type="FunFam" id="2.60.40.180:FF:000002">
    <property type="entry name" value="Transthyretin"/>
    <property type="match status" value="1"/>
</dbReference>
<dbReference type="Gene3D" id="2.60.40.180">
    <property type="entry name" value="Transthyretin/hydroxyisourate hydrolase domain"/>
    <property type="match status" value="1"/>
</dbReference>
<dbReference type="InterPro" id="IPR023418">
    <property type="entry name" value="Thyroxine_BS"/>
</dbReference>
<dbReference type="InterPro" id="IPR000895">
    <property type="entry name" value="Transthyretin/HIU_hydrolase"/>
</dbReference>
<dbReference type="InterPro" id="IPR023416">
    <property type="entry name" value="Transthyretin/HIU_hydrolase_d"/>
</dbReference>
<dbReference type="InterPro" id="IPR036817">
    <property type="entry name" value="Transthyretin/HIU_hydrolase_sf"/>
</dbReference>
<dbReference type="InterPro" id="IPR023419">
    <property type="entry name" value="Transthyretin_CS"/>
</dbReference>
<dbReference type="PANTHER" id="PTHR10395:SF12">
    <property type="entry name" value="TRANSTHYRETIN"/>
    <property type="match status" value="1"/>
</dbReference>
<dbReference type="PANTHER" id="PTHR10395">
    <property type="entry name" value="URICASE AND TRANSTHYRETIN-RELATED"/>
    <property type="match status" value="1"/>
</dbReference>
<dbReference type="Pfam" id="PF00576">
    <property type="entry name" value="Transthyretin"/>
    <property type="match status" value="1"/>
</dbReference>
<dbReference type="PRINTS" id="PR00189">
    <property type="entry name" value="TRNSTHYRETIN"/>
</dbReference>
<dbReference type="SMART" id="SM00095">
    <property type="entry name" value="TR_THY"/>
    <property type="match status" value="1"/>
</dbReference>
<dbReference type="SUPFAM" id="SSF49472">
    <property type="entry name" value="Transthyretin (synonym: prealbumin)"/>
    <property type="match status" value="1"/>
</dbReference>
<dbReference type="PROSITE" id="PS00768">
    <property type="entry name" value="TRANSTHYRETIN_1"/>
    <property type="match status" value="1"/>
</dbReference>
<dbReference type="PROSITE" id="PS00769">
    <property type="entry name" value="TRANSTHYRETIN_2"/>
    <property type="match status" value="1"/>
</dbReference>
<gene>
    <name type="primary">TTR</name>
</gene>
<protein>
    <recommendedName>
        <fullName>Transthyretin</fullName>
    </recommendedName>
    <alternativeName>
        <fullName>Prealbumin</fullName>
    </alternativeName>
</protein>
<keyword id="KW-0301">Gamma-carboxyglutamic acid</keyword>
<keyword id="KW-0325">Glycoprotein</keyword>
<keyword id="KW-0372">Hormone</keyword>
<keyword id="KW-1185">Reference proteome</keyword>
<keyword id="KW-0964">Secreted</keyword>
<keyword id="KW-0732">Signal</keyword>
<keyword id="KW-0765">Sulfation</keyword>
<keyword id="KW-0795">Thyroid hormone</keyword>
<keyword id="KW-0813">Transport</keyword>
<name>TTHY_PIG</name>
<evidence type="ECO:0000250" key="1">
    <source>
        <dbReference type="UniProtKB" id="P02766"/>
    </source>
</evidence>
<evidence type="ECO:0000255" key="2"/>
<evidence type="ECO:0000269" key="3">
    <source>
    </source>
</evidence>
<evidence type="ECO:0000305" key="4"/>